<accession>P49758</accession>
<accession>C9JE95</accession>
<accession>F8W7W5</accession>
<accession>O75576</accession>
<accession>O75577</accession>
<accession>Q7Z4K3</accession>
<accession>Q7Z4K4</accession>
<accession>Q7Z4K5</accession>
<accession>Q7Z4K6</accession>
<accession>Q8TE13</accession>
<accession>Q8TE14</accession>
<accession>Q8TE15</accession>
<accession>Q8TE16</accession>
<accession>Q8TE17</accession>
<accession>Q8TE18</accession>
<accession>Q8TE19</accession>
<accession>Q8TE20</accession>
<accession>Q8TE21</accession>
<accession>Q8TE22</accession>
<accession>Q9UDS8</accession>
<accession>Q9UDT0</accession>
<accession>Q9Y245</accession>
<accession>Q9Y647</accession>
<proteinExistence type="evidence at protein level"/>
<reference key="1">
    <citation type="journal article" date="2003" name="J. Biol. Chem.">
        <title>Human RGS6 gene structure, complex alternative splicing, and role of N terminus and G protein gamma-subunit-like (GGL) domain in subcellular localization of RGS6 splice variants.</title>
        <authorList>
            <person name="Chatterjee T.K."/>
            <person name="Liu Z."/>
            <person name="Fisher R.A."/>
        </authorList>
    </citation>
    <scope>NUCLEOTIDE SEQUENCE [GENOMIC DNA / MRNA] (ISOFORMS 1; 2; 5; 6; 7; 8; 9; 10; 11; 12; 13; 14; 15 AND 16)</scope>
    <scope>INTERACTION WITH GNB5</scope>
    <scope>SUBCELLULAR LOCATION</scope>
</reference>
<reference key="2">
    <citation type="journal article" date="1999" name="Proc. Natl. Acad. Sci. U.S.A.">
        <title>Fidelity of G protein beta-subunit association by the G protein gamma-subunit-like domains of RGS6, RGS7, and RGS11.</title>
        <authorList>
            <person name="Snow B.E."/>
            <person name="Betts L."/>
            <person name="Mangion J."/>
            <person name="Sondek J."/>
            <person name="Siderovski D.P."/>
        </authorList>
    </citation>
    <scope>NUCLEOTIDE SEQUENCE [MRNA] (ISOFORMS 1 AND 3)</scope>
    <scope>INTERACTION WITH GNB5</scope>
    <scope>MUTAGENESIS OF ASP-297 AND TRP-309</scope>
    <source>
        <tissue>Brain</tissue>
    </source>
</reference>
<reference key="3">
    <citation type="journal article" date="1999" name="J. Biol. Chem.">
        <title>Regulators of G protein signaling 6 and 7. Purification of complexes with gbeta5 and assessment of their effects on g protein-mediated signaling pathways.</title>
        <authorList>
            <person name="Posner B.A."/>
            <person name="Gilman A.G."/>
            <person name="Harris B.A."/>
        </authorList>
    </citation>
    <scope>NUCLEOTIDE SEQUENCE [MRNA] (ISOFORM 1)</scope>
    <scope>FUNCTION</scope>
    <scope>INTERACTION WITH GNB5</scope>
    <scope>SUBCELLULAR LOCATION</scope>
</reference>
<reference key="4">
    <citation type="journal article" date="2003" name="Nature">
        <title>The DNA sequence and analysis of human chromosome 14.</title>
        <authorList>
            <person name="Heilig R."/>
            <person name="Eckenberg R."/>
            <person name="Petit J.-L."/>
            <person name="Fonknechten N."/>
            <person name="Da Silva C."/>
            <person name="Cattolico L."/>
            <person name="Levy M."/>
            <person name="Barbe V."/>
            <person name="De Berardinis V."/>
            <person name="Ureta-Vidal A."/>
            <person name="Pelletier E."/>
            <person name="Vico V."/>
            <person name="Anthouard V."/>
            <person name="Rowen L."/>
            <person name="Madan A."/>
            <person name="Qin S."/>
            <person name="Sun H."/>
            <person name="Du H."/>
            <person name="Pepin K."/>
            <person name="Artiguenave F."/>
            <person name="Robert C."/>
            <person name="Cruaud C."/>
            <person name="Bruels T."/>
            <person name="Jaillon O."/>
            <person name="Friedlander L."/>
            <person name="Samson G."/>
            <person name="Brottier P."/>
            <person name="Cure S."/>
            <person name="Segurens B."/>
            <person name="Aniere F."/>
            <person name="Samain S."/>
            <person name="Crespeau H."/>
            <person name="Abbasi N."/>
            <person name="Aiach N."/>
            <person name="Boscus D."/>
            <person name="Dickhoff R."/>
            <person name="Dors M."/>
            <person name="Dubois I."/>
            <person name="Friedman C."/>
            <person name="Gouyvenoux M."/>
            <person name="James R."/>
            <person name="Madan A."/>
            <person name="Mairey-Estrada B."/>
            <person name="Mangenot S."/>
            <person name="Martins N."/>
            <person name="Menard M."/>
            <person name="Oztas S."/>
            <person name="Ratcliffe A."/>
            <person name="Shaffer T."/>
            <person name="Trask B."/>
            <person name="Vacherie B."/>
            <person name="Bellemere C."/>
            <person name="Belser C."/>
            <person name="Besnard-Gonnet M."/>
            <person name="Bartol-Mavel D."/>
            <person name="Boutard M."/>
            <person name="Briez-Silla S."/>
            <person name="Combette S."/>
            <person name="Dufosse-Laurent V."/>
            <person name="Ferron C."/>
            <person name="Lechaplais C."/>
            <person name="Louesse C."/>
            <person name="Muselet D."/>
            <person name="Magdelenat G."/>
            <person name="Pateau E."/>
            <person name="Petit E."/>
            <person name="Sirvain-Trukniewicz P."/>
            <person name="Trybou A."/>
            <person name="Vega-Czarny N."/>
            <person name="Bataille E."/>
            <person name="Bluet E."/>
            <person name="Bordelais I."/>
            <person name="Dubois M."/>
            <person name="Dumont C."/>
            <person name="Guerin T."/>
            <person name="Haffray S."/>
            <person name="Hammadi R."/>
            <person name="Muanga J."/>
            <person name="Pellouin V."/>
            <person name="Robert D."/>
            <person name="Wunderle E."/>
            <person name="Gauguet G."/>
            <person name="Roy A."/>
            <person name="Sainte-Marthe L."/>
            <person name="Verdier J."/>
            <person name="Verdier-Discala C."/>
            <person name="Hillier L.W."/>
            <person name="Fulton L."/>
            <person name="McPherson J."/>
            <person name="Matsuda F."/>
            <person name="Wilson R."/>
            <person name="Scarpelli C."/>
            <person name="Gyapay G."/>
            <person name="Wincker P."/>
            <person name="Saurin W."/>
            <person name="Quetier F."/>
            <person name="Waterston R."/>
            <person name="Hood L."/>
            <person name="Weissenbach J."/>
        </authorList>
    </citation>
    <scope>NUCLEOTIDE SEQUENCE [LARGE SCALE GENOMIC DNA]</scope>
</reference>
<reference key="5">
    <citation type="journal article" date="1995" name="Nature">
        <title>Cloning of a gene bearing missense mutations in early-onset familial Alzheimer's disease.</title>
        <authorList>
            <person name="Sherrington R."/>
            <person name="Rogaev E.I."/>
            <person name="Liang Y."/>
            <person name="Rogaeva E.A."/>
            <person name="Levesque G."/>
            <person name="Ikeda M."/>
            <person name="Chi H."/>
            <person name="Lin C."/>
            <person name="Li G."/>
            <person name="Holman K."/>
            <person name="Tsuda T."/>
            <person name="Mar L."/>
            <person name="Foncin J.-F."/>
            <person name="Bruni A.C."/>
            <person name="Montesi M.P."/>
            <person name="Sorbi S."/>
            <person name="Rainero I."/>
            <person name="Pinessi L."/>
            <person name="Nee L."/>
            <person name="Chumakov I."/>
            <person name="Pollen D."/>
            <person name="Brookes A."/>
            <person name="Sanseau P."/>
            <person name="Polinsky R.J."/>
            <person name="Wasco W."/>
            <person name="da Silva H.A.R."/>
            <person name="Haines J.L."/>
            <person name="Pericak-Vance M.A."/>
            <person name="Tanzi R.E."/>
            <person name="Roses A.D."/>
            <person name="Fraser P.E."/>
            <person name="Rommens J.M."/>
            <person name="St George-Hyslop P.H."/>
        </authorList>
    </citation>
    <scope>NUCLEOTIDE SEQUENCE [MRNA] OF 362-472 (ISOFORM 1)</scope>
    <source>
        <tissue>Brain</tissue>
    </source>
</reference>
<reference key="6">
    <citation type="journal article" date="2008" name="Proc. Natl. Acad. Sci. U.S.A.">
        <title>Structural diversity in the RGS domain and its interaction with heterotrimeric G protein alpha-subunits.</title>
        <authorList>
            <person name="Soundararajan M."/>
            <person name="Willard F.S."/>
            <person name="Kimple A.J."/>
            <person name="Turnbull A.P."/>
            <person name="Ball L.J."/>
            <person name="Schoch G.A."/>
            <person name="Gileadi C."/>
            <person name="Fedorov O.Y."/>
            <person name="Dowler E.F."/>
            <person name="Higman V.A."/>
            <person name="Hutsell S.Q."/>
            <person name="Sundstroem M."/>
            <person name="Doyle D.A."/>
            <person name="Siderovski D.P."/>
        </authorList>
    </citation>
    <scope>X-RAY CRYSTALLOGRAPHY (2.1 ANGSTROMS) OF 325-470</scope>
    <scope>INTERACTION WITH GNAI1</scope>
</reference>
<feature type="chain" id="PRO_0000204192" description="Regulator of G-protein signaling 6">
    <location>
        <begin position="1"/>
        <end position="472"/>
    </location>
</feature>
<feature type="domain" description="DEP" evidence="2">
    <location>
        <begin position="40"/>
        <end position="115"/>
    </location>
</feature>
<feature type="domain" description="G protein gamma">
    <location>
        <begin position="261"/>
        <end position="330"/>
    </location>
</feature>
<feature type="domain" description="RGS" evidence="3">
    <location>
        <begin position="336"/>
        <end position="441"/>
    </location>
</feature>
<feature type="splice variant" id="VSP_035845" description="In isoform 12." evidence="9">
    <location>
        <begin position="1"/>
        <end position="139"/>
    </location>
</feature>
<feature type="splice variant" id="VSP_035846" description="In isoform 6, isoform 7, isoform 9, isoform 10 and isoform 11." evidence="9">
    <location>
        <begin position="285"/>
        <end position="321"/>
    </location>
</feature>
<feature type="splice variant" id="VSP_035847" description="In isoform 3 and isoform 9." evidence="8 9">
    <original>K</original>
    <variation>KPESEQGRRTSLEKFTRSV</variation>
    <location>
        <position position="456"/>
    </location>
</feature>
<feature type="splice variant" id="VSP_047806" description="In isoform 13." evidence="9">
    <original>GKSLAGKRLTGLMQSS</original>
    <variation>PESEQGRRTSLEKFTRSVG</variation>
    <location>
        <begin position="457"/>
        <end position="472"/>
    </location>
</feature>
<feature type="splice variant" id="VSP_047807" description="In isoform 14." evidence="9">
    <original>GKSLAGKRLTGLMQSS</original>
    <variation>PESEQGRRTSLEKFTRSVLLF</variation>
    <location>
        <begin position="457"/>
        <end position="472"/>
    </location>
</feature>
<feature type="splice variant" id="VSP_047808" description="In isoform 15." evidence="9">
    <original>GKSLAGKRLTGLMQSS</original>
    <variation>PESEQGRRTSLEKFTRSVCLQLLF</variation>
    <location>
        <begin position="457"/>
        <end position="472"/>
    </location>
</feature>
<feature type="splice variant" id="VSP_047809" description="In isoform 16." evidence="9">
    <original>GKSLAGKRLTGLMQSS</original>
    <variation>VWLL</variation>
    <location>
        <begin position="457"/>
        <end position="472"/>
    </location>
</feature>
<feature type="splice variant" id="VSP_035848" description="In isoform 2, isoform 10 and isoform 12." evidence="9">
    <original>GKSLAGKRLTGLMQSS</original>
    <variation>PESEQGRRTSLEKFTRSVLYSNTPLAKRP</variation>
    <location>
        <begin position="457"/>
        <end position="472"/>
    </location>
</feature>
<feature type="splice variant" id="VSP_035849" description="In isoform 5 and isoform 6." evidence="9">
    <original>GKSLAGKRLTGLMQSS</original>
    <variation>KVSKVVELP</variation>
    <location>
        <begin position="457"/>
        <end position="472"/>
    </location>
</feature>
<feature type="splice variant" id="VSP_035850" description="In isoform 8 and isoform 11." evidence="9">
    <original>GKSLAGKRLTGLMQSS</original>
    <variation>LYSNTPLAKRP</variation>
    <location>
        <begin position="457"/>
        <end position="472"/>
    </location>
</feature>
<feature type="mutagenesis site" description="Loss of interaction with GNB5." evidence="4">
    <original>D</original>
    <variation>A</variation>
    <location>
        <position position="297"/>
    </location>
</feature>
<feature type="mutagenesis site" description="Diminishes interaction with GNB5." evidence="4">
    <original>W</original>
    <variation>F</variation>
    <location>
        <position position="309"/>
    </location>
</feature>
<feature type="sequence conflict" description="In Ref. 1; AAC26049/AAM03004/AAM03005/AAM03006/AAM03007/AAM03008/AAM03009/AAM03010/AAM03011/AAM03012/AAM03013." evidence="10" ref="1">
    <original>R</original>
    <variation>K</variation>
    <location>
        <position position="165"/>
    </location>
</feature>
<feature type="sequence conflict" description="In Ref. 1; AAC26049/AAM03004/AAM03005/AAM03006/AAM03007/AAM03008/AAM03009/AAM03010/AAM03011/AAM03012/AAM03013." evidence="10" ref="1">
    <original>V</original>
    <variation>L</variation>
    <location>
        <position position="210"/>
    </location>
</feature>
<feature type="sequence conflict" description="In Ref. 1; AAC26049/AAM03004/AAM03005/AAM03006/AAM03009/AAM03010." evidence="10" ref="1">
    <original>DD</original>
    <variation>EE</variation>
    <location>
        <begin position="312"/>
        <end position="313"/>
    </location>
</feature>
<feature type="sequence conflict" description="In Ref. 1; AAC26049/AAM03004/AAM03005/AAM03006/AAM03007/AAM03008/AAM03009/AAM03010/AAM03011/AAM03012/AAM03013." evidence="10" ref="1">
    <original>E</original>
    <variation>D</variation>
    <location>
        <position position="324"/>
    </location>
</feature>
<feature type="sequence conflict" description="In Ref. 5; AAC42001." evidence="10" ref="5">
    <original>L</original>
    <variation>C</variation>
    <location>
        <position position="465"/>
    </location>
</feature>
<feature type="helix" evidence="11">
    <location>
        <begin position="327"/>
        <end position="333"/>
    </location>
</feature>
<feature type="helix" evidence="11">
    <location>
        <begin position="337"/>
        <end position="342"/>
    </location>
</feature>
<feature type="helix" evidence="11">
    <location>
        <begin position="344"/>
        <end position="356"/>
    </location>
</feature>
<feature type="helix" evidence="11">
    <location>
        <begin position="360"/>
        <end position="373"/>
    </location>
</feature>
<feature type="helix" evidence="11">
    <location>
        <begin position="377"/>
        <end position="379"/>
    </location>
</feature>
<feature type="helix" evidence="11">
    <location>
        <begin position="380"/>
        <end position="391"/>
    </location>
</feature>
<feature type="helix" evidence="11">
    <location>
        <begin position="404"/>
        <end position="416"/>
    </location>
</feature>
<feature type="turn" evidence="11">
    <location>
        <begin position="417"/>
        <end position="422"/>
    </location>
</feature>
<feature type="helix" evidence="11">
    <location>
        <begin position="423"/>
        <end position="436"/>
    </location>
</feature>
<feature type="helix" evidence="11">
    <location>
        <begin position="438"/>
        <end position="443"/>
    </location>
</feature>
<feature type="helix" evidence="11">
    <location>
        <begin position="445"/>
        <end position="448"/>
    </location>
</feature>
<feature type="turn" evidence="11">
    <location>
        <begin position="449"/>
        <end position="451"/>
    </location>
</feature>
<dbReference type="EMBL" id="AF073920">
    <property type="protein sequence ID" value="AAC26049.2"/>
    <property type="molecule type" value="mRNA"/>
</dbReference>
<dbReference type="EMBL" id="AF073921">
    <property type="protein sequence ID" value="AAC26050.1"/>
    <property type="molecule type" value="mRNA"/>
</dbReference>
<dbReference type="EMBL" id="AY309097">
    <property type="protein sequence ID" value="AAP74386.1"/>
    <property type="molecule type" value="mRNA"/>
</dbReference>
<dbReference type="EMBL" id="AY309098">
    <property type="protein sequence ID" value="AAP74387.1"/>
    <property type="molecule type" value="mRNA"/>
</dbReference>
<dbReference type="EMBL" id="AY309099">
    <property type="protein sequence ID" value="AAP74388.1"/>
    <property type="molecule type" value="mRNA"/>
</dbReference>
<dbReference type="EMBL" id="AY309100">
    <property type="protein sequence ID" value="AAP74389.1"/>
    <property type="molecule type" value="mRNA"/>
</dbReference>
<dbReference type="EMBL" id="AF465727">
    <property type="protein sequence ID" value="AAM03004.1"/>
    <property type="molecule type" value="Genomic_DNA"/>
</dbReference>
<dbReference type="EMBL" id="AF465711">
    <property type="protein sequence ID" value="AAM03004.1"/>
    <property type="status" value="JOINED"/>
    <property type="molecule type" value="Genomic_DNA"/>
</dbReference>
<dbReference type="EMBL" id="AF465712">
    <property type="protein sequence ID" value="AAM03004.1"/>
    <property type="status" value="JOINED"/>
    <property type="molecule type" value="Genomic_DNA"/>
</dbReference>
<dbReference type="EMBL" id="AF465713">
    <property type="protein sequence ID" value="AAM03004.1"/>
    <property type="status" value="JOINED"/>
    <property type="molecule type" value="Genomic_DNA"/>
</dbReference>
<dbReference type="EMBL" id="AF465714">
    <property type="protein sequence ID" value="AAM03004.1"/>
    <property type="status" value="JOINED"/>
    <property type="molecule type" value="Genomic_DNA"/>
</dbReference>
<dbReference type="EMBL" id="AF465715">
    <property type="protein sequence ID" value="AAM03004.1"/>
    <property type="status" value="JOINED"/>
    <property type="molecule type" value="Genomic_DNA"/>
</dbReference>
<dbReference type="EMBL" id="AF465716">
    <property type="protein sequence ID" value="AAM03004.1"/>
    <property type="status" value="JOINED"/>
    <property type="molecule type" value="Genomic_DNA"/>
</dbReference>
<dbReference type="EMBL" id="AF465717">
    <property type="protein sequence ID" value="AAM03004.1"/>
    <property type="status" value="JOINED"/>
    <property type="molecule type" value="Genomic_DNA"/>
</dbReference>
<dbReference type="EMBL" id="AF465718">
    <property type="protein sequence ID" value="AAM03004.1"/>
    <property type="status" value="JOINED"/>
    <property type="molecule type" value="Genomic_DNA"/>
</dbReference>
<dbReference type="EMBL" id="AF465719">
    <property type="protein sequence ID" value="AAM03004.1"/>
    <property type="status" value="JOINED"/>
    <property type="molecule type" value="Genomic_DNA"/>
</dbReference>
<dbReference type="EMBL" id="AF465720">
    <property type="protein sequence ID" value="AAM03004.1"/>
    <property type="status" value="JOINED"/>
    <property type="molecule type" value="Genomic_DNA"/>
</dbReference>
<dbReference type="EMBL" id="AF465721">
    <property type="protein sequence ID" value="AAM03004.1"/>
    <property type="status" value="JOINED"/>
    <property type="molecule type" value="Genomic_DNA"/>
</dbReference>
<dbReference type="EMBL" id="AF465722">
    <property type="protein sequence ID" value="AAM03004.1"/>
    <property type="status" value="JOINED"/>
    <property type="molecule type" value="Genomic_DNA"/>
</dbReference>
<dbReference type="EMBL" id="AF465723">
    <property type="protein sequence ID" value="AAM03004.1"/>
    <property type="status" value="JOINED"/>
    <property type="molecule type" value="Genomic_DNA"/>
</dbReference>
<dbReference type="EMBL" id="AF465724">
    <property type="protein sequence ID" value="AAM03004.1"/>
    <property type="status" value="JOINED"/>
    <property type="molecule type" value="Genomic_DNA"/>
</dbReference>
<dbReference type="EMBL" id="AF465725">
    <property type="protein sequence ID" value="AAM03004.1"/>
    <property type="status" value="JOINED"/>
    <property type="molecule type" value="Genomic_DNA"/>
</dbReference>
<dbReference type="EMBL" id="AF465726">
    <property type="protein sequence ID" value="AAM03004.1"/>
    <property type="status" value="JOINED"/>
    <property type="molecule type" value="Genomic_DNA"/>
</dbReference>
<dbReference type="EMBL" id="AF465727">
    <property type="protein sequence ID" value="AAM03005.1"/>
    <property type="molecule type" value="Genomic_DNA"/>
</dbReference>
<dbReference type="EMBL" id="AF465711">
    <property type="protein sequence ID" value="AAM03005.1"/>
    <property type="status" value="JOINED"/>
    <property type="molecule type" value="Genomic_DNA"/>
</dbReference>
<dbReference type="EMBL" id="AF465712">
    <property type="protein sequence ID" value="AAM03005.1"/>
    <property type="status" value="JOINED"/>
    <property type="molecule type" value="Genomic_DNA"/>
</dbReference>
<dbReference type="EMBL" id="AF465713">
    <property type="protein sequence ID" value="AAM03005.1"/>
    <property type="status" value="JOINED"/>
    <property type="molecule type" value="Genomic_DNA"/>
</dbReference>
<dbReference type="EMBL" id="AF465714">
    <property type="protein sequence ID" value="AAM03005.1"/>
    <property type="status" value="JOINED"/>
    <property type="molecule type" value="Genomic_DNA"/>
</dbReference>
<dbReference type="EMBL" id="AF465715">
    <property type="protein sequence ID" value="AAM03005.1"/>
    <property type="status" value="JOINED"/>
    <property type="molecule type" value="Genomic_DNA"/>
</dbReference>
<dbReference type="EMBL" id="AF465716">
    <property type="protein sequence ID" value="AAM03005.1"/>
    <property type="status" value="JOINED"/>
    <property type="molecule type" value="Genomic_DNA"/>
</dbReference>
<dbReference type="EMBL" id="AF465717">
    <property type="protein sequence ID" value="AAM03005.1"/>
    <property type="status" value="JOINED"/>
    <property type="molecule type" value="Genomic_DNA"/>
</dbReference>
<dbReference type="EMBL" id="AF465718">
    <property type="protein sequence ID" value="AAM03005.1"/>
    <property type="status" value="JOINED"/>
    <property type="molecule type" value="Genomic_DNA"/>
</dbReference>
<dbReference type="EMBL" id="AF465719">
    <property type="protein sequence ID" value="AAM03005.1"/>
    <property type="status" value="JOINED"/>
    <property type="molecule type" value="Genomic_DNA"/>
</dbReference>
<dbReference type="EMBL" id="AF465720">
    <property type="protein sequence ID" value="AAM03005.1"/>
    <property type="status" value="JOINED"/>
    <property type="molecule type" value="Genomic_DNA"/>
</dbReference>
<dbReference type="EMBL" id="AF465721">
    <property type="protein sequence ID" value="AAM03005.1"/>
    <property type="status" value="JOINED"/>
    <property type="molecule type" value="Genomic_DNA"/>
</dbReference>
<dbReference type="EMBL" id="AF465722">
    <property type="protein sequence ID" value="AAM03005.1"/>
    <property type="status" value="JOINED"/>
    <property type="molecule type" value="Genomic_DNA"/>
</dbReference>
<dbReference type="EMBL" id="AF465723">
    <property type="protein sequence ID" value="AAM03005.1"/>
    <property type="status" value="JOINED"/>
    <property type="molecule type" value="Genomic_DNA"/>
</dbReference>
<dbReference type="EMBL" id="AF465724">
    <property type="protein sequence ID" value="AAM03005.1"/>
    <property type="status" value="JOINED"/>
    <property type="molecule type" value="Genomic_DNA"/>
</dbReference>
<dbReference type="EMBL" id="AF465725">
    <property type="protein sequence ID" value="AAM03005.1"/>
    <property type="status" value="JOINED"/>
    <property type="molecule type" value="Genomic_DNA"/>
</dbReference>
<dbReference type="EMBL" id="AF465726">
    <property type="protein sequence ID" value="AAM03005.1"/>
    <property type="status" value="JOINED"/>
    <property type="molecule type" value="Genomic_DNA"/>
</dbReference>
<dbReference type="EMBL" id="AF465726">
    <property type="protein sequence ID" value="AAM03006.1"/>
    <property type="molecule type" value="Genomic_DNA"/>
</dbReference>
<dbReference type="EMBL" id="AF465711">
    <property type="protein sequence ID" value="AAM03006.1"/>
    <property type="status" value="JOINED"/>
    <property type="molecule type" value="Genomic_DNA"/>
</dbReference>
<dbReference type="EMBL" id="AF465712">
    <property type="protein sequence ID" value="AAM03006.1"/>
    <property type="status" value="JOINED"/>
    <property type="molecule type" value="Genomic_DNA"/>
</dbReference>
<dbReference type="EMBL" id="AF465713">
    <property type="protein sequence ID" value="AAM03006.1"/>
    <property type="status" value="JOINED"/>
    <property type="molecule type" value="Genomic_DNA"/>
</dbReference>
<dbReference type="EMBL" id="AF465714">
    <property type="protein sequence ID" value="AAM03006.1"/>
    <property type="status" value="JOINED"/>
    <property type="molecule type" value="Genomic_DNA"/>
</dbReference>
<dbReference type="EMBL" id="AF465715">
    <property type="protein sequence ID" value="AAM03006.1"/>
    <property type="status" value="JOINED"/>
    <property type="molecule type" value="Genomic_DNA"/>
</dbReference>
<dbReference type="EMBL" id="AF465716">
    <property type="protein sequence ID" value="AAM03006.1"/>
    <property type="status" value="JOINED"/>
    <property type="molecule type" value="Genomic_DNA"/>
</dbReference>
<dbReference type="EMBL" id="AF465717">
    <property type="protein sequence ID" value="AAM03006.1"/>
    <property type="status" value="JOINED"/>
    <property type="molecule type" value="Genomic_DNA"/>
</dbReference>
<dbReference type="EMBL" id="AF465718">
    <property type="protein sequence ID" value="AAM03006.1"/>
    <property type="status" value="JOINED"/>
    <property type="molecule type" value="Genomic_DNA"/>
</dbReference>
<dbReference type="EMBL" id="AF465719">
    <property type="protein sequence ID" value="AAM03006.1"/>
    <property type="status" value="JOINED"/>
    <property type="molecule type" value="Genomic_DNA"/>
</dbReference>
<dbReference type="EMBL" id="AF465720">
    <property type="protein sequence ID" value="AAM03006.1"/>
    <property type="status" value="JOINED"/>
    <property type="molecule type" value="Genomic_DNA"/>
</dbReference>
<dbReference type="EMBL" id="AF465721">
    <property type="protein sequence ID" value="AAM03006.1"/>
    <property type="status" value="JOINED"/>
    <property type="molecule type" value="Genomic_DNA"/>
</dbReference>
<dbReference type="EMBL" id="AF465722">
    <property type="protein sequence ID" value="AAM03006.1"/>
    <property type="status" value="JOINED"/>
    <property type="molecule type" value="Genomic_DNA"/>
</dbReference>
<dbReference type="EMBL" id="AF465723">
    <property type="protein sequence ID" value="AAM03006.1"/>
    <property type="status" value="JOINED"/>
    <property type="molecule type" value="Genomic_DNA"/>
</dbReference>
<dbReference type="EMBL" id="AF465724">
    <property type="protein sequence ID" value="AAM03006.1"/>
    <property type="status" value="JOINED"/>
    <property type="molecule type" value="Genomic_DNA"/>
</dbReference>
<dbReference type="EMBL" id="AF465725">
    <property type="protein sequence ID" value="AAM03006.1"/>
    <property type="status" value="JOINED"/>
    <property type="molecule type" value="Genomic_DNA"/>
</dbReference>
<dbReference type="EMBL" id="AF465727">
    <property type="protein sequence ID" value="AAM03007.1"/>
    <property type="molecule type" value="Genomic_DNA"/>
</dbReference>
<dbReference type="EMBL" id="AF465711">
    <property type="protein sequence ID" value="AAM03007.1"/>
    <property type="status" value="JOINED"/>
    <property type="molecule type" value="Genomic_DNA"/>
</dbReference>
<dbReference type="EMBL" id="AF465712">
    <property type="protein sequence ID" value="AAM03007.1"/>
    <property type="status" value="JOINED"/>
    <property type="molecule type" value="Genomic_DNA"/>
</dbReference>
<dbReference type="EMBL" id="AF465713">
    <property type="protein sequence ID" value="AAM03007.1"/>
    <property type="status" value="JOINED"/>
    <property type="molecule type" value="Genomic_DNA"/>
</dbReference>
<dbReference type="EMBL" id="AF465714">
    <property type="protein sequence ID" value="AAM03007.1"/>
    <property type="status" value="JOINED"/>
    <property type="molecule type" value="Genomic_DNA"/>
</dbReference>
<dbReference type="EMBL" id="AF465715">
    <property type="protein sequence ID" value="AAM03007.1"/>
    <property type="status" value="JOINED"/>
    <property type="molecule type" value="Genomic_DNA"/>
</dbReference>
<dbReference type="EMBL" id="AF465716">
    <property type="protein sequence ID" value="AAM03007.1"/>
    <property type="status" value="JOINED"/>
    <property type="molecule type" value="Genomic_DNA"/>
</dbReference>
<dbReference type="EMBL" id="AF465717">
    <property type="protein sequence ID" value="AAM03007.1"/>
    <property type="status" value="JOINED"/>
    <property type="molecule type" value="Genomic_DNA"/>
</dbReference>
<dbReference type="EMBL" id="AF465718">
    <property type="protein sequence ID" value="AAM03007.1"/>
    <property type="status" value="JOINED"/>
    <property type="molecule type" value="Genomic_DNA"/>
</dbReference>
<dbReference type="EMBL" id="AF465719">
    <property type="protein sequence ID" value="AAM03007.1"/>
    <property type="status" value="JOINED"/>
    <property type="molecule type" value="Genomic_DNA"/>
</dbReference>
<dbReference type="EMBL" id="AF465720">
    <property type="protein sequence ID" value="AAM03007.1"/>
    <property type="status" value="JOINED"/>
    <property type="molecule type" value="Genomic_DNA"/>
</dbReference>
<dbReference type="EMBL" id="AF465721">
    <property type="protein sequence ID" value="AAM03007.1"/>
    <property type="status" value="JOINED"/>
    <property type="molecule type" value="Genomic_DNA"/>
</dbReference>
<dbReference type="EMBL" id="AF465723">
    <property type="protein sequence ID" value="AAM03007.1"/>
    <property type="status" value="JOINED"/>
    <property type="molecule type" value="Genomic_DNA"/>
</dbReference>
<dbReference type="EMBL" id="AF465724">
    <property type="protein sequence ID" value="AAM03007.1"/>
    <property type="status" value="JOINED"/>
    <property type="molecule type" value="Genomic_DNA"/>
</dbReference>
<dbReference type="EMBL" id="AF465725">
    <property type="protein sequence ID" value="AAM03007.1"/>
    <property type="status" value="JOINED"/>
    <property type="molecule type" value="Genomic_DNA"/>
</dbReference>
<dbReference type="EMBL" id="AF465726">
    <property type="protein sequence ID" value="AAM03007.1"/>
    <property type="status" value="JOINED"/>
    <property type="molecule type" value="Genomic_DNA"/>
</dbReference>
<dbReference type="EMBL" id="AF465727">
    <property type="protein sequence ID" value="AAM03008.1"/>
    <property type="molecule type" value="Genomic_DNA"/>
</dbReference>
<dbReference type="EMBL" id="AF465711">
    <property type="protein sequence ID" value="AAM03008.1"/>
    <property type="status" value="JOINED"/>
    <property type="molecule type" value="Genomic_DNA"/>
</dbReference>
<dbReference type="EMBL" id="AF465712">
    <property type="protein sequence ID" value="AAM03008.1"/>
    <property type="status" value="JOINED"/>
    <property type="molecule type" value="Genomic_DNA"/>
</dbReference>
<dbReference type="EMBL" id="AF465713">
    <property type="protein sequence ID" value="AAM03008.1"/>
    <property type="status" value="JOINED"/>
    <property type="molecule type" value="Genomic_DNA"/>
</dbReference>
<dbReference type="EMBL" id="AF465714">
    <property type="protein sequence ID" value="AAM03008.1"/>
    <property type="status" value="JOINED"/>
    <property type="molecule type" value="Genomic_DNA"/>
</dbReference>
<dbReference type="EMBL" id="AF465715">
    <property type="protein sequence ID" value="AAM03008.1"/>
    <property type="status" value="JOINED"/>
    <property type="molecule type" value="Genomic_DNA"/>
</dbReference>
<dbReference type="EMBL" id="AF465716">
    <property type="protein sequence ID" value="AAM03008.1"/>
    <property type="status" value="JOINED"/>
    <property type="molecule type" value="Genomic_DNA"/>
</dbReference>
<dbReference type="EMBL" id="AF465717">
    <property type="protein sequence ID" value="AAM03008.1"/>
    <property type="status" value="JOINED"/>
    <property type="molecule type" value="Genomic_DNA"/>
</dbReference>
<dbReference type="EMBL" id="AF465718">
    <property type="protein sequence ID" value="AAM03008.1"/>
    <property type="status" value="JOINED"/>
    <property type="molecule type" value="Genomic_DNA"/>
</dbReference>
<dbReference type="EMBL" id="AF465719">
    <property type="protein sequence ID" value="AAM03008.1"/>
    <property type="status" value="JOINED"/>
    <property type="molecule type" value="Genomic_DNA"/>
</dbReference>
<dbReference type="EMBL" id="AF465720">
    <property type="protein sequence ID" value="AAM03008.1"/>
    <property type="status" value="JOINED"/>
    <property type="molecule type" value="Genomic_DNA"/>
</dbReference>
<dbReference type="EMBL" id="AF465721">
    <property type="protein sequence ID" value="AAM03008.1"/>
    <property type="status" value="JOINED"/>
    <property type="molecule type" value="Genomic_DNA"/>
</dbReference>
<dbReference type="EMBL" id="AF465723">
    <property type="protein sequence ID" value="AAM03008.1"/>
    <property type="status" value="JOINED"/>
    <property type="molecule type" value="Genomic_DNA"/>
</dbReference>
<dbReference type="EMBL" id="AF465724">
    <property type="protein sequence ID" value="AAM03008.1"/>
    <property type="status" value="JOINED"/>
    <property type="molecule type" value="Genomic_DNA"/>
</dbReference>
<dbReference type="EMBL" id="AF465725">
    <property type="protein sequence ID" value="AAM03008.1"/>
    <property type="status" value="JOINED"/>
    <property type="molecule type" value="Genomic_DNA"/>
</dbReference>
<dbReference type="EMBL" id="AF465726">
    <property type="protein sequence ID" value="AAM03008.1"/>
    <property type="status" value="JOINED"/>
    <property type="molecule type" value="Genomic_DNA"/>
</dbReference>
<dbReference type="EMBL" id="AF465727">
    <property type="protein sequence ID" value="AAM03009.1"/>
    <property type="molecule type" value="Genomic_DNA"/>
</dbReference>
<dbReference type="EMBL" id="AF465711">
    <property type="protein sequence ID" value="AAM03009.1"/>
    <property type="status" value="JOINED"/>
    <property type="molecule type" value="Genomic_DNA"/>
</dbReference>
<dbReference type="EMBL" id="AF465712">
    <property type="protein sequence ID" value="AAM03009.1"/>
    <property type="status" value="JOINED"/>
    <property type="molecule type" value="Genomic_DNA"/>
</dbReference>
<dbReference type="EMBL" id="AF465713">
    <property type="protein sequence ID" value="AAM03009.1"/>
    <property type="status" value="JOINED"/>
    <property type="molecule type" value="Genomic_DNA"/>
</dbReference>
<dbReference type="EMBL" id="AF465714">
    <property type="protein sequence ID" value="AAM03009.1"/>
    <property type="status" value="JOINED"/>
    <property type="molecule type" value="Genomic_DNA"/>
</dbReference>
<dbReference type="EMBL" id="AF465715">
    <property type="protein sequence ID" value="AAM03009.1"/>
    <property type="status" value="JOINED"/>
    <property type="molecule type" value="Genomic_DNA"/>
</dbReference>
<dbReference type="EMBL" id="AF465716">
    <property type="protein sequence ID" value="AAM03009.1"/>
    <property type="status" value="JOINED"/>
    <property type="molecule type" value="Genomic_DNA"/>
</dbReference>
<dbReference type="EMBL" id="AF465717">
    <property type="protein sequence ID" value="AAM03009.1"/>
    <property type="status" value="JOINED"/>
    <property type="molecule type" value="Genomic_DNA"/>
</dbReference>
<dbReference type="EMBL" id="AF465718">
    <property type="protein sequence ID" value="AAM03009.1"/>
    <property type="status" value="JOINED"/>
    <property type="molecule type" value="Genomic_DNA"/>
</dbReference>
<dbReference type="EMBL" id="AF465719">
    <property type="protein sequence ID" value="AAM03009.1"/>
    <property type="status" value="JOINED"/>
    <property type="molecule type" value="Genomic_DNA"/>
</dbReference>
<dbReference type="EMBL" id="AF465720">
    <property type="protein sequence ID" value="AAM03009.1"/>
    <property type="status" value="JOINED"/>
    <property type="molecule type" value="Genomic_DNA"/>
</dbReference>
<dbReference type="EMBL" id="AF465721">
    <property type="protein sequence ID" value="AAM03009.1"/>
    <property type="status" value="JOINED"/>
    <property type="molecule type" value="Genomic_DNA"/>
</dbReference>
<dbReference type="EMBL" id="AF465722">
    <property type="protein sequence ID" value="AAM03009.1"/>
    <property type="status" value="JOINED"/>
    <property type="molecule type" value="Genomic_DNA"/>
</dbReference>
<dbReference type="EMBL" id="AF465723">
    <property type="protein sequence ID" value="AAM03009.1"/>
    <property type="status" value="JOINED"/>
    <property type="molecule type" value="Genomic_DNA"/>
</dbReference>
<dbReference type="EMBL" id="AF465724">
    <property type="protein sequence ID" value="AAM03009.1"/>
    <property type="status" value="JOINED"/>
    <property type="molecule type" value="Genomic_DNA"/>
</dbReference>
<dbReference type="EMBL" id="AF465725">
    <property type="protein sequence ID" value="AAM03009.1"/>
    <property type="status" value="JOINED"/>
    <property type="molecule type" value="Genomic_DNA"/>
</dbReference>
<dbReference type="EMBL" id="AF465727">
    <property type="protein sequence ID" value="AAM03010.1"/>
    <property type="molecule type" value="Genomic_DNA"/>
</dbReference>
<dbReference type="EMBL" id="AF465711">
    <property type="protein sequence ID" value="AAM03010.1"/>
    <property type="status" value="JOINED"/>
    <property type="molecule type" value="Genomic_DNA"/>
</dbReference>
<dbReference type="EMBL" id="AF465712">
    <property type="protein sequence ID" value="AAM03010.1"/>
    <property type="status" value="JOINED"/>
    <property type="molecule type" value="Genomic_DNA"/>
</dbReference>
<dbReference type="EMBL" id="AF465713">
    <property type="protein sequence ID" value="AAM03010.1"/>
    <property type="status" value="JOINED"/>
    <property type="molecule type" value="Genomic_DNA"/>
</dbReference>
<dbReference type="EMBL" id="AF465714">
    <property type="protein sequence ID" value="AAM03010.1"/>
    <property type="status" value="JOINED"/>
    <property type="molecule type" value="Genomic_DNA"/>
</dbReference>
<dbReference type="EMBL" id="AF465715">
    <property type="protein sequence ID" value="AAM03010.1"/>
    <property type="status" value="JOINED"/>
    <property type="molecule type" value="Genomic_DNA"/>
</dbReference>
<dbReference type="EMBL" id="AF465716">
    <property type="protein sequence ID" value="AAM03010.1"/>
    <property type="status" value="JOINED"/>
    <property type="molecule type" value="Genomic_DNA"/>
</dbReference>
<dbReference type="EMBL" id="AF465717">
    <property type="protein sequence ID" value="AAM03010.1"/>
    <property type="status" value="JOINED"/>
    <property type="molecule type" value="Genomic_DNA"/>
</dbReference>
<dbReference type="EMBL" id="AF465718">
    <property type="protein sequence ID" value="AAM03010.1"/>
    <property type="status" value="JOINED"/>
    <property type="molecule type" value="Genomic_DNA"/>
</dbReference>
<dbReference type="EMBL" id="AF465719">
    <property type="protein sequence ID" value="AAM03010.1"/>
    <property type="status" value="JOINED"/>
    <property type="molecule type" value="Genomic_DNA"/>
</dbReference>
<dbReference type="EMBL" id="AF465720">
    <property type="protein sequence ID" value="AAM03010.1"/>
    <property type="status" value="JOINED"/>
    <property type="molecule type" value="Genomic_DNA"/>
</dbReference>
<dbReference type="EMBL" id="AF465721">
    <property type="protein sequence ID" value="AAM03010.1"/>
    <property type="status" value="JOINED"/>
    <property type="molecule type" value="Genomic_DNA"/>
</dbReference>
<dbReference type="EMBL" id="AF465722">
    <property type="protein sequence ID" value="AAM03010.1"/>
    <property type="status" value="JOINED"/>
    <property type="molecule type" value="Genomic_DNA"/>
</dbReference>
<dbReference type="EMBL" id="AF465723">
    <property type="protein sequence ID" value="AAM03010.1"/>
    <property type="status" value="JOINED"/>
    <property type="molecule type" value="Genomic_DNA"/>
</dbReference>
<dbReference type="EMBL" id="AF465724">
    <property type="protein sequence ID" value="AAM03010.1"/>
    <property type="status" value="JOINED"/>
    <property type="molecule type" value="Genomic_DNA"/>
</dbReference>
<dbReference type="EMBL" id="AF465725">
    <property type="protein sequence ID" value="AAM03010.1"/>
    <property type="status" value="JOINED"/>
    <property type="molecule type" value="Genomic_DNA"/>
</dbReference>
<dbReference type="EMBL" id="AF465727">
    <property type="protein sequence ID" value="AAM03011.1"/>
    <property type="molecule type" value="Genomic_DNA"/>
</dbReference>
<dbReference type="EMBL" id="AF465711">
    <property type="protein sequence ID" value="AAM03011.1"/>
    <property type="status" value="JOINED"/>
    <property type="molecule type" value="Genomic_DNA"/>
</dbReference>
<dbReference type="EMBL" id="AF465712">
    <property type="protein sequence ID" value="AAM03011.1"/>
    <property type="status" value="JOINED"/>
    <property type="molecule type" value="Genomic_DNA"/>
</dbReference>
<dbReference type="EMBL" id="AF465713">
    <property type="protein sequence ID" value="AAM03011.1"/>
    <property type="status" value="JOINED"/>
    <property type="molecule type" value="Genomic_DNA"/>
</dbReference>
<dbReference type="EMBL" id="AF465714">
    <property type="protein sequence ID" value="AAM03011.1"/>
    <property type="status" value="JOINED"/>
    <property type="molecule type" value="Genomic_DNA"/>
</dbReference>
<dbReference type="EMBL" id="AF465715">
    <property type="protein sequence ID" value="AAM03011.1"/>
    <property type="status" value="JOINED"/>
    <property type="molecule type" value="Genomic_DNA"/>
</dbReference>
<dbReference type="EMBL" id="AF465716">
    <property type="protein sequence ID" value="AAM03011.1"/>
    <property type="status" value="JOINED"/>
    <property type="molecule type" value="Genomic_DNA"/>
</dbReference>
<dbReference type="EMBL" id="AF465717">
    <property type="protein sequence ID" value="AAM03011.1"/>
    <property type="status" value="JOINED"/>
    <property type="molecule type" value="Genomic_DNA"/>
</dbReference>
<dbReference type="EMBL" id="AF465718">
    <property type="protein sequence ID" value="AAM03011.1"/>
    <property type="status" value="JOINED"/>
    <property type="molecule type" value="Genomic_DNA"/>
</dbReference>
<dbReference type="EMBL" id="AF465719">
    <property type="protein sequence ID" value="AAM03011.1"/>
    <property type="status" value="JOINED"/>
    <property type="molecule type" value="Genomic_DNA"/>
</dbReference>
<dbReference type="EMBL" id="AF465720">
    <property type="protein sequence ID" value="AAM03011.1"/>
    <property type="status" value="JOINED"/>
    <property type="molecule type" value="Genomic_DNA"/>
</dbReference>
<dbReference type="EMBL" id="AF465721">
    <property type="protein sequence ID" value="AAM03011.1"/>
    <property type="status" value="JOINED"/>
    <property type="molecule type" value="Genomic_DNA"/>
</dbReference>
<dbReference type="EMBL" id="AF465723">
    <property type="protein sequence ID" value="AAM03011.1"/>
    <property type="status" value="JOINED"/>
    <property type="molecule type" value="Genomic_DNA"/>
</dbReference>
<dbReference type="EMBL" id="AF465724">
    <property type="protein sequence ID" value="AAM03011.1"/>
    <property type="status" value="JOINED"/>
    <property type="molecule type" value="Genomic_DNA"/>
</dbReference>
<dbReference type="EMBL" id="AF465725">
    <property type="protein sequence ID" value="AAM03011.1"/>
    <property type="status" value="JOINED"/>
    <property type="molecule type" value="Genomic_DNA"/>
</dbReference>
<dbReference type="EMBL" id="AF465727">
    <property type="protein sequence ID" value="AAM03012.1"/>
    <property type="molecule type" value="Genomic_DNA"/>
</dbReference>
<dbReference type="EMBL" id="AF465711">
    <property type="protein sequence ID" value="AAM03012.1"/>
    <property type="status" value="JOINED"/>
    <property type="molecule type" value="Genomic_DNA"/>
</dbReference>
<dbReference type="EMBL" id="AF465712">
    <property type="protein sequence ID" value="AAM03012.1"/>
    <property type="status" value="JOINED"/>
    <property type="molecule type" value="Genomic_DNA"/>
</dbReference>
<dbReference type="EMBL" id="AF465713">
    <property type="protein sequence ID" value="AAM03012.1"/>
    <property type="status" value="JOINED"/>
    <property type="molecule type" value="Genomic_DNA"/>
</dbReference>
<dbReference type="EMBL" id="AF465714">
    <property type="protein sequence ID" value="AAM03012.1"/>
    <property type="status" value="JOINED"/>
    <property type="molecule type" value="Genomic_DNA"/>
</dbReference>
<dbReference type="EMBL" id="AF465715">
    <property type="protein sequence ID" value="AAM03012.1"/>
    <property type="status" value="JOINED"/>
    <property type="molecule type" value="Genomic_DNA"/>
</dbReference>
<dbReference type="EMBL" id="AF465716">
    <property type="protein sequence ID" value="AAM03012.1"/>
    <property type="status" value="JOINED"/>
    <property type="molecule type" value="Genomic_DNA"/>
</dbReference>
<dbReference type="EMBL" id="AF465717">
    <property type="protein sequence ID" value="AAM03012.1"/>
    <property type="status" value="JOINED"/>
    <property type="molecule type" value="Genomic_DNA"/>
</dbReference>
<dbReference type="EMBL" id="AF465718">
    <property type="protein sequence ID" value="AAM03012.1"/>
    <property type="status" value="JOINED"/>
    <property type="molecule type" value="Genomic_DNA"/>
</dbReference>
<dbReference type="EMBL" id="AF465719">
    <property type="protein sequence ID" value="AAM03012.1"/>
    <property type="status" value="JOINED"/>
    <property type="molecule type" value="Genomic_DNA"/>
</dbReference>
<dbReference type="EMBL" id="AF465720">
    <property type="protein sequence ID" value="AAM03012.1"/>
    <property type="status" value="JOINED"/>
    <property type="molecule type" value="Genomic_DNA"/>
</dbReference>
<dbReference type="EMBL" id="AF465721">
    <property type="protein sequence ID" value="AAM03012.1"/>
    <property type="status" value="JOINED"/>
    <property type="molecule type" value="Genomic_DNA"/>
</dbReference>
<dbReference type="EMBL" id="AF465723">
    <property type="protein sequence ID" value="AAM03012.1"/>
    <property type="status" value="JOINED"/>
    <property type="molecule type" value="Genomic_DNA"/>
</dbReference>
<dbReference type="EMBL" id="AF465724">
    <property type="protein sequence ID" value="AAM03012.1"/>
    <property type="status" value="JOINED"/>
    <property type="molecule type" value="Genomic_DNA"/>
</dbReference>
<dbReference type="EMBL" id="AF465725">
    <property type="protein sequence ID" value="AAM03012.1"/>
    <property type="status" value="JOINED"/>
    <property type="molecule type" value="Genomic_DNA"/>
</dbReference>
<dbReference type="EMBL" id="AF465726">
    <property type="protein sequence ID" value="AAM03013.1"/>
    <property type="molecule type" value="Genomic_DNA"/>
</dbReference>
<dbReference type="EMBL" id="AF465711">
    <property type="protein sequence ID" value="AAM03013.1"/>
    <property type="status" value="JOINED"/>
    <property type="molecule type" value="Genomic_DNA"/>
</dbReference>
<dbReference type="EMBL" id="AF465712">
    <property type="protein sequence ID" value="AAM03013.1"/>
    <property type="status" value="JOINED"/>
    <property type="molecule type" value="Genomic_DNA"/>
</dbReference>
<dbReference type="EMBL" id="AF465713">
    <property type="protein sequence ID" value="AAM03013.1"/>
    <property type="status" value="JOINED"/>
    <property type="molecule type" value="Genomic_DNA"/>
</dbReference>
<dbReference type="EMBL" id="AF465714">
    <property type="protein sequence ID" value="AAM03013.1"/>
    <property type="status" value="JOINED"/>
    <property type="molecule type" value="Genomic_DNA"/>
</dbReference>
<dbReference type="EMBL" id="AF465715">
    <property type="protein sequence ID" value="AAM03013.1"/>
    <property type="status" value="JOINED"/>
    <property type="molecule type" value="Genomic_DNA"/>
</dbReference>
<dbReference type="EMBL" id="AF465716">
    <property type="protein sequence ID" value="AAM03013.1"/>
    <property type="status" value="JOINED"/>
    <property type="molecule type" value="Genomic_DNA"/>
</dbReference>
<dbReference type="EMBL" id="AF465717">
    <property type="protein sequence ID" value="AAM03013.1"/>
    <property type="status" value="JOINED"/>
    <property type="molecule type" value="Genomic_DNA"/>
</dbReference>
<dbReference type="EMBL" id="AF465718">
    <property type="protein sequence ID" value="AAM03013.1"/>
    <property type="status" value="JOINED"/>
    <property type="molecule type" value="Genomic_DNA"/>
</dbReference>
<dbReference type="EMBL" id="AF465719">
    <property type="protein sequence ID" value="AAM03013.1"/>
    <property type="status" value="JOINED"/>
    <property type="molecule type" value="Genomic_DNA"/>
</dbReference>
<dbReference type="EMBL" id="AF465720">
    <property type="protein sequence ID" value="AAM03013.1"/>
    <property type="status" value="JOINED"/>
    <property type="molecule type" value="Genomic_DNA"/>
</dbReference>
<dbReference type="EMBL" id="AF465721">
    <property type="protein sequence ID" value="AAM03013.1"/>
    <property type="status" value="JOINED"/>
    <property type="molecule type" value="Genomic_DNA"/>
</dbReference>
<dbReference type="EMBL" id="AF465723">
    <property type="protein sequence ID" value="AAM03013.1"/>
    <property type="status" value="JOINED"/>
    <property type="molecule type" value="Genomic_DNA"/>
</dbReference>
<dbReference type="EMBL" id="AF465724">
    <property type="protein sequence ID" value="AAM03013.1"/>
    <property type="status" value="JOINED"/>
    <property type="molecule type" value="Genomic_DNA"/>
</dbReference>
<dbReference type="EMBL" id="AF465725">
    <property type="protein sequence ID" value="AAM03013.1"/>
    <property type="status" value="JOINED"/>
    <property type="molecule type" value="Genomic_DNA"/>
</dbReference>
<dbReference type="EMBL" id="AF107619">
    <property type="protein sequence ID" value="AAD34717.1"/>
    <property type="molecule type" value="mRNA"/>
</dbReference>
<dbReference type="EMBL" id="AF107620">
    <property type="protein sequence ID" value="AAD34718.1"/>
    <property type="molecule type" value="mRNA"/>
</dbReference>
<dbReference type="EMBL" id="AF156932">
    <property type="protein sequence ID" value="AAD40183.1"/>
    <property type="molecule type" value="mRNA"/>
</dbReference>
<dbReference type="EMBL" id="AC004828">
    <property type="status" value="NOT_ANNOTATED_CDS"/>
    <property type="molecule type" value="Genomic_DNA"/>
</dbReference>
<dbReference type="EMBL" id="AC005157">
    <property type="protein sequence ID" value="AAC83180.1"/>
    <property type="molecule type" value="Genomic_DNA"/>
</dbReference>
<dbReference type="EMBL" id="AC005226">
    <property type="status" value="NOT_ANNOTATED_CDS"/>
    <property type="molecule type" value="Genomic_DNA"/>
</dbReference>
<dbReference type="EMBL" id="AC005227">
    <property type="status" value="NOT_ANNOTATED_CDS"/>
    <property type="molecule type" value="Genomic_DNA"/>
</dbReference>
<dbReference type="EMBL" id="AC005477">
    <property type="protein sequence ID" value="AAD05031.1"/>
    <property type="molecule type" value="Genomic_DNA"/>
</dbReference>
<dbReference type="EMBL" id="AC005533">
    <property type="status" value="NOT_ANNOTATED_CDS"/>
    <property type="molecule type" value="Genomic_DNA"/>
</dbReference>
<dbReference type="EMBL" id="AC005857">
    <property type="status" value="NOT_ANNOTATED_CDS"/>
    <property type="molecule type" value="Genomic_DNA"/>
</dbReference>
<dbReference type="EMBL" id="AC005993">
    <property type="status" value="NOT_ANNOTATED_CDS"/>
    <property type="molecule type" value="Genomic_DNA"/>
</dbReference>
<dbReference type="EMBL" id="L40394">
    <property type="protein sequence ID" value="AAC42001.1"/>
    <property type="status" value="ALT_FRAME"/>
    <property type="molecule type" value="mRNA"/>
</dbReference>
<dbReference type="CCDS" id="CCDS55924.1">
    <molecule id="P49758-3"/>
</dbReference>
<dbReference type="CCDS" id="CCDS91897.1">
    <molecule id="P49758-5"/>
</dbReference>
<dbReference type="CCDS" id="CCDS9808.1">
    <molecule id="P49758-4"/>
</dbReference>
<dbReference type="RefSeq" id="NP_001191345.1">
    <molecule id="P49758-3"/>
    <property type="nucleotide sequence ID" value="NM_001204416.3"/>
</dbReference>
<dbReference type="RefSeq" id="NP_001191346.1">
    <molecule id="P49758-2"/>
    <property type="nucleotide sequence ID" value="NM_001204417.3"/>
</dbReference>
<dbReference type="RefSeq" id="NP_001191347.1">
    <molecule id="P49758-8"/>
    <property type="nucleotide sequence ID" value="NM_001204418.3"/>
</dbReference>
<dbReference type="RefSeq" id="NP_001191348.1">
    <molecule id="P49758-9"/>
    <property type="nucleotide sequence ID" value="NM_001204419.3"/>
</dbReference>
<dbReference type="RefSeq" id="NP_001191349.1">
    <molecule id="P49758-7"/>
    <property type="nucleotide sequence ID" value="NM_001204420.3"/>
</dbReference>
<dbReference type="RefSeq" id="NP_001191350.1">
    <molecule id="P49758-10"/>
    <property type="nucleotide sequence ID" value="NM_001204421.3"/>
</dbReference>
<dbReference type="RefSeq" id="NP_001191351.1">
    <molecule id="P49758-11"/>
    <property type="nucleotide sequence ID" value="NM_001204422.3"/>
</dbReference>
<dbReference type="RefSeq" id="NP_001191352.1">
    <property type="nucleotide sequence ID" value="NM_001204423.1"/>
</dbReference>
<dbReference type="RefSeq" id="NP_001191353.1">
    <molecule id="P49758-3"/>
    <property type="nucleotide sequence ID" value="NM_001204424.2"/>
</dbReference>
<dbReference type="RefSeq" id="NP_001357213.1">
    <molecule id="P49758-3"/>
    <property type="nucleotide sequence ID" value="NM_001370284.1"/>
</dbReference>
<dbReference type="RefSeq" id="NP_001357216.1">
    <molecule id="P49758-4"/>
    <property type="nucleotide sequence ID" value="NM_001370287.1"/>
</dbReference>
<dbReference type="RefSeq" id="NP_001357217.1">
    <molecule id="P49758-4"/>
    <property type="nucleotide sequence ID" value="NM_001370288.1"/>
</dbReference>
<dbReference type="RefSeq" id="NP_001357218.1">
    <molecule id="P49758-4"/>
    <property type="nucleotide sequence ID" value="NM_001370289.1"/>
</dbReference>
<dbReference type="RefSeq" id="NP_001357219.1">
    <molecule id="P49758-5"/>
    <property type="nucleotide sequence ID" value="NM_001370290.1"/>
</dbReference>
<dbReference type="RefSeq" id="NP_001357220.1">
    <molecule id="P49758-5"/>
    <property type="nucleotide sequence ID" value="NM_001370291.1"/>
</dbReference>
<dbReference type="RefSeq" id="NP_001357221.1">
    <molecule id="P49758-7"/>
    <property type="nucleotide sequence ID" value="NM_001370292.1"/>
</dbReference>
<dbReference type="RefSeq" id="NP_001357222.1">
    <molecule id="P49758-7"/>
    <property type="nucleotide sequence ID" value="NM_001370293.1"/>
</dbReference>
<dbReference type="RefSeq" id="NP_004287.3">
    <molecule id="P49758-4"/>
    <property type="nucleotide sequence ID" value="NM_004296.6"/>
</dbReference>
<dbReference type="RefSeq" id="XP_016877315.1">
    <molecule id="P49758-13"/>
    <property type="nucleotide sequence ID" value="XM_017021826.3"/>
</dbReference>
<dbReference type="RefSeq" id="XP_016877318.1">
    <property type="nucleotide sequence ID" value="XM_017021829.1"/>
</dbReference>
<dbReference type="RefSeq" id="XP_016877319.1">
    <molecule id="P49758-5"/>
    <property type="nucleotide sequence ID" value="XM_017021830.3"/>
</dbReference>
<dbReference type="RefSeq" id="XP_016877321.1">
    <molecule id="P49758-16"/>
    <property type="nucleotide sequence ID" value="XM_017021832.3"/>
</dbReference>
<dbReference type="RefSeq" id="XP_016877323.1">
    <property type="nucleotide sequence ID" value="XM_017021834.1"/>
</dbReference>
<dbReference type="RefSeq" id="XP_024305544.1">
    <molecule id="P49758-9"/>
    <property type="nucleotide sequence ID" value="XM_024449776.2"/>
</dbReference>
<dbReference type="RefSeq" id="XP_054233081.1">
    <molecule id="P49758-13"/>
    <property type="nucleotide sequence ID" value="XM_054377106.1"/>
</dbReference>
<dbReference type="RefSeq" id="XP_054233084.1">
    <molecule id="P49758-5"/>
    <property type="nucleotide sequence ID" value="XM_054377109.1"/>
</dbReference>
<dbReference type="RefSeq" id="XP_054233085.1">
    <molecule id="P49758-5"/>
    <property type="nucleotide sequence ID" value="XM_054377110.1"/>
</dbReference>
<dbReference type="RefSeq" id="XP_054233087.1">
    <molecule id="P49758-16"/>
    <property type="nucleotide sequence ID" value="XM_054377112.1"/>
</dbReference>
<dbReference type="RefSeq" id="XP_054233088.1">
    <molecule id="P49758-9"/>
    <property type="nucleotide sequence ID" value="XM_054377113.1"/>
</dbReference>
<dbReference type="PDB" id="2ES0">
    <property type="method" value="X-ray"/>
    <property type="resolution" value="2.10 A"/>
    <property type="chains" value="A=325-470"/>
</dbReference>
<dbReference type="PDBsum" id="2ES0"/>
<dbReference type="SMR" id="P49758"/>
<dbReference type="BioGRID" id="114987">
    <property type="interactions" value="18"/>
</dbReference>
<dbReference type="CORUM" id="P49758"/>
<dbReference type="FunCoup" id="P49758">
    <property type="interactions" value="780"/>
</dbReference>
<dbReference type="IntAct" id="P49758">
    <property type="interactions" value="9"/>
</dbReference>
<dbReference type="STRING" id="9606.ENSP00000451030"/>
<dbReference type="iPTMnet" id="P49758"/>
<dbReference type="PhosphoSitePlus" id="P49758"/>
<dbReference type="BioMuta" id="RGS6"/>
<dbReference type="DMDM" id="215274268"/>
<dbReference type="MassIVE" id="P49758"/>
<dbReference type="PaxDb" id="9606-ENSP00000451030"/>
<dbReference type="PeptideAtlas" id="P49758"/>
<dbReference type="ProteomicsDB" id="56079">
    <molecule id="P49758-4"/>
</dbReference>
<dbReference type="ProteomicsDB" id="56080">
    <molecule id="P49758-10"/>
</dbReference>
<dbReference type="ProteomicsDB" id="56081">
    <molecule id="P49758-11"/>
</dbReference>
<dbReference type="ProteomicsDB" id="56082">
    <molecule id="P49758-12"/>
</dbReference>
<dbReference type="ProteomicsDB" id="56083">
    <molecule id="P49758-2"/>
</dbReference>
<dbReference type="ProteomicsDB" id="56084">
    <molecule id="P49758-3"/>
</dbReference>
<dbReference type="ProteomicsDB" id="56085">
    <molecule id="P49758-5"/>
</dbReference>
<dbReference type="ProteomicsDB" id="56086">
    <molecule id="P49758-6"/>
</dbReference>
<dbReference type="ProteomicsDB" id="56087">
    <molecule id="P49758-7"/>
</dbReference>
<dbReference type="ProteomicsDB" id="56088">
    <molecule id="P49758-8"/>
</dbReference>
<dbReference type="ProteomicsDB" id="56089">
    <molecule id="P49758-9"/>
</dbReference>
<dbReference type="ProteomicsDB" id="69197"/>
<dbReference type="ProteomicsDB" id="69198"/>
<dbReference type="ProteomicsDB" id="69199"/>
<dbReference type="ProteomicsDB" id="69200"/>
<dbReference type="Antibodypedia" id="145">
    <property type="antibodies" value="133 antibodies from 26 providers"/>
</dbReference>
<dbReference type="DNASU" id="9628"/>
<dbReference type="Ensembl" id="ENST00000355512.10">
    <molecule id="P49758-16"/>
    <property type="protein sequence ID" value="ENSP00000347699.6"/>
    <property type="gene ID" value="ENSG00000182732.18"/>
</dbReference>
<dbReference type="Ensembl" id="ENST00000404301.6">
    <molecule id="P49758-15"/>
    <property type="protein sequence ID" value="ENSP00000385243.2"/>
    <property type="gene ID" value="ENSG00000182732.18"/>
</dbReference>
<dbReference type="Ensembl" id="ENST00000406236.8">
    <molecule id="P49758-13"/>
    <property type="protein sequence ID" value="ENSP00000384218.4"/>
    <property type="gene ID" value="ENSG00000182732.18"/>
</dbReference>
<dbReference type="Ensembl" id="ENST00000407322.8">
    <molecule id="P49758-14"/>
    <property type="protein sequence ID" value="ENSP00000384612.4"/>
    <property type="gene ID" value="ENSG00000182732.18"/>
</dbReference>
<dbReference type="Ensembl" id="ENST00000553525.6">
    <molecule id="P49758-3"/>
    <property type="protein sequence ID" value="ENSP00000451030.1"/>
    <property type="gene ID" value="ENSG00000182732.18"/>
</dbReference>
<dbReference type="Ensembl" id="ENST00000553530.5">
    <molecule id="P49758-4"/>
    <property type="protein sequence ID" value="ENSP00000452331.1"/>
    <property type="gene ID" value="ENSG00000182732.18"/>
</dbReference>
<dbReference type="Ensembl" id="ENST00000554474.5">
    <molecule id="P49758-5"/>
    <property type="protein sequence ID" value="ENSP00000450858.1"/>
    <property type="gene ID" value="ENSG00000182732.18"/>
</dbReference>
<dbReference type="Ensembl" id="ENST00000554782.1">
    <molecule id="P49758-12"/>
    <property type="protein sequence ID" value="ENSP00000451912.1"/>
    <property type="gene ID" value="ENSG00000182732.18"/>
</dbReference>
<dbReference type="Ensembl" id="ENST00000555571.5">
    <molecule id="P49758-4"/>
    <property type="protein sequence ID" value="ENSP00000450936.1"/>
    <property type="gene ID" value="ENSG00000182732.18"/>
</dbReference>
<dbReference type="Ensembl" id="ENST00000556437.5">
    <molecule id="P49758-3"/>
    <property type="protein sequence ID" value="ENSP00000451855.1"/>
    <property type="gene ID" value="ENSG00000182732.18"/>
</dbReference>
<dbReference type="GeneID" id="9628"/>
<dbReference type="KEGG" id="hsa:9628"/>
<dbReference type="MANE-Select" id="ENST00000553525.6">
    <molecule id="P49758-3"/>
    <property type="protein sequence ID" value="ENSP00000451030.1"/>
    <property type="RefSeq nucleotide sequence ID" value="NM_001204424.2"/>
    <property type="RefSeq protein sequence ID" value="NP_001191353.1"/>
</dbReference>
<dbReference type="UCSC" id="uc001xmy.5">
    <molecule id="P49758-4"/>
    <property type="organism name" value="human"/>
</dbReference>
<dbReference type="AGR" id="HGNC:10002"/>
<dbReference type="CTD" id="9628"/>
<dbReference type="DisGeNET" id="9628"/>
<dbReference type="GeneCards" id="RGS6"/>
<dbReference type="HGNC" id="HGNC:10002">
    <property type="gene designation" value="RGS6"/>
</dbReference>
<dbReference type="HPA" id="ENSG00000182732">
    <property type="expression patterns" value="Tissue enhanced (brain, heart muscle, testis)"/>
</dbReference>
<dbReference type="MalaCards" id="RGS6"/>
<dbReference type="MIM" id="603894">
    <property type="type" value="gene"/>
</dbReference>
<dbReference type="neXtProt" id="NX_P49758"/>
<dbReference type="OpenTargets" id="ENSG00000182732"/>
<dbReference type="PharmGKB" id="PA34377"/>
<dbReference type="VEuPathDB" id="HostDB:ENSG00000182732"/>
<dbReference type="eggNOG" id="KOG3589">
    <property type="taxonomic scope" value="Eukaryota"/>
</dbReference>
<dbReference type="GeneTree" id="ENSGT00940000157159"/>
<dbReference type="InParanoid" id="P49758"/>
<dbReference type="OMA" id="PWINDTV"/>
<dbReference type="OrthoDB" id="196547at2759"/>
<dbReference type="PAN-GO" id="P49758">
    <property type="GO annotations" value="5 GO annotations based on evolutionary models"/>
</dbReference>
<dbReference type="PhylomeDB" id="P49758"/>
<dbReference type="TreeFam" id="TF351956"/>
<dbReference type="PathwayCommons" id="P49758"/>
<dbReference type="Reactome" id="R-HSA-418594">
    <property type="pathway name" value="G alpha (i) signalling events"/>
</dbReference>
<dbReference type="Reactome" id="R-HSA-6814122">
    <property type="pathway name" value="Cooperation of PDCL (PhLP1) and TRiC/CCT in G-protein beta folding"/>
</dbReference>
<dbReference type="SignaLink" id="P49758"/>
<dbReference type="SIGNOR" id="P49758"/>
<dbReference type="BioGRID-ORCS" id="9628">
    <property type="hits" value="6 hits in 1142 CRISPR screens"/>
</dbReference>
<dbReference type="ChiTaRS" id="RGS6">
    <property type="organism name" value="human"/>
</dbReference>
<dbReference type="EvolutionaryTrace" id="P49758"/>
<dbReference type="GeneWiki" id="RGS6"/>
<dbReference type="GenomeRNAi" id="9628"/>
<dbReference type="Pharos" id="P49758">
    <property type="development level" value="Tbio"/>
</dbReference>
<dbReference type="PRO" id="PR:P49758"/>
<dbReference type="Proteomes" id="UP000005640">
    <property type="component" value="Chromosome 14"/>
</dbReference>
<dbReference type="RNAct" id="P49758">
    <property type="molecule type" value="protein"/>
</dbReference>
<dbReference type="Bgee" id="ENSG00000182732">
    <property type="expression patterns" value="Expressed in cortical plate and 129 other cell types or tissues"/>
</dbReference>
<dbReference type="ExpressionAtlas" id="P49758">
    <property type="expression patterns" value="baseline and differential"/>
</dbReference>
<dbReference type="GO" id="GO:0005737">
    <property type="term" value="C:cytoplasm"/>
    <property type="evidence" value="ECO:0000318"/>
    <property type="project" value="GO_Central"/>
</dbReference>
<dbReference type="GO" id="GO:0005829">
    <property type="term" value="C:cytosol"/>
    <property type="evidence" value="ECO:0000314"/>
    <property type="project" value="UniProtKB"/>
</dbReference>
<dbReference type="GO" id="GO:0016020">
    <property type="term" value="C:membrane"/>
    <property type="evidence" value="ECO:0000314"/>
    <property type="project" value="UniProtKB"/>
</dbReference>
<dbReference type="GO" id="GO:0043005">
    <property type="term" value="C:neuron projection"/>
    <property type="evidence" value="ECO:0000318"/>
    <property type="project" value="GO_Central"/>
</dbReference>
<dbReference type="GO" id="GO:0005634">
    <property type="term" value="C:nucleus"/>
    <property type="evidence" value="ECO:0007669"/>
    <property type="project" value="UniProtKB-SubCell"/>
</dbReference>
<dbReference type="GO" id="GO:0005886">
    <property type="term" value="C:plasma membrane"/>
    <property type="evidence" value="ECO:0000304"/>
    <property type="project" value="Reactome"/>
</dbReference>
<dbReference type="GO" id="GO:0005096">
    <property type="term" value="F:GTPase activator activity"/>
    <property type="evidence" value="ECO:0000314"/>
    <property type="project" value="UniProtKB"/>
</dbReference>
<dbReference type="GO" id="GO:0003924">
    <property type="term" value="F:GTPase activity"/>
    <property type="evidence" value="ECO:0000304"/>
    <property type="project" value="Reactome"/>
</dbReference>
<dbReference type="GO" id="GO:0007186">
    <property type="term" value="P:G protein-coupled receptor signaling pathway"/>
    <property type="evidence" value="ECO:0000318"/>
    <property type="project" value="GO_Central"/>
</dbReference>
<dbReference type="GO" id="GO:0035556">
    <property type="term" value="P:intracellular signal transduction"/>
    <property type="evidence" value="ECO:0007669"/>
    <property type="project" value="InterPro"/>
</dbReference>
<dbReference type="GO" id="GO:0009968">
    <property type="term" value="P:negative regulation of signal transduction"/>
    <property type="evidence" value="ECO:0007669"/>
    <property type="project" value="UniProtKB-KW"/>
</dbReference>
<dbReference type="GO" id="GO:0043547">
    <property type="term" value="P:positive regulation of GTPase activity"/>
    <property type="evidence" value="ECO:0000314"/>
    <property type="project" value="UniProtKB"/>
</dbReference>
<dbReference type="GO" id="GO:0008277">
    <property type="term" value="P:regulation of G protein-coupled receptor signaling pathway"/>
    <property type="evidence" value="ECO:0000304"/>
    <property type="project" value="ProtInc"/>
</dbReference>
<dbReference type="CDD" id="cd04450">
    <property type="entry name" value="DEP_RGS7-like"/>
    <property type="match status" value="1"/>
</dbReference>
<dbReference type="CDD" id="cd00068">
    <property type="entry name" value="GGL"/>
    <property type="match status" value="1"/>
</dbReference>
<dbReference type="CDD" id="cd08737">
    <property type="entry name" value="RGS_RGS6"/>
    <property type="match status" value="1"/>
</dbReference>
<dbReference type="FunFam" id="1.10.10.10:FF:000162">
    <property type="entry name" value="Regulator of G-protein signaling 6"/>
    <property type="match status" value="1"/>
</dbReference>
<dbReference type="FunFam" id="1.10.1240.60:FF:000001">
    <property type="entry name" value="Regulator of G-protein signaling 6"/>
    <property type="match status" value="1"/>
</dbReference>
<dbReference type="FunFam" id="4.10.260.10:FF:000002">
    <property type="entry name" value="Regulator of G-protein signaling 6"/>
    <property type="match status" value="1"/>
</dbReference>
<dbReference type="FunFam" id="1.10.167.10:FF:000002">
    <property type="entry name" value="Regulator of G-protein signaling 6 isoform 9"/>
    <property type="match status" value="1"/>
</dbReference>
<dbReference type="Gene3D" id="1.10.1240.60">
    <property type="match status" value="1"/>
</dbReference>
<dbReference type="Gene3D" id="1.10.167.10">
    <property type="entry name" value="Regulator of G-protein Signalling 4, domain 2"/>
    <property type="match status" value="1"/>
</dbReference>
<dbReference type="Gene3D" id="4.10.260.10">
    <property type="entry name" value="Transducin (heterotrimeric G protein), gamma chain"/>
    <property type="match status" value="1"/>
</dbReference>
<dbReference type="Gene3D" id="1.10.10.10">
    <property type="entry name" value="Winged helix-like DNA-binding domain superfamily/Winged helix DNA-binding domain"/>
    <property type="match status" value="1"/>
</dbReference>
<dbReference type="InterPro" id="IPR000591">
    <property type="entry name" value="DEP_dom"/>
</dbReference>
<dbReference type="InterPro" id="IPR015898">
    <property type="entry name" value="G-protein_gamma-like_dom"/>
</dbReference>
<dbReference type="InterPro" id="IPR036284">
    <property type="entry name" value="GGL_sf"/>
</dbReference>
<dbReference type="InterPro" id="IPR016137">
    <property type="entry name" value="RGS"/>
</dbReference>
<dbReference type="InterPro" id="IPR047016">
    <property type="entry name" value="RGS6/7/9/11"/>
</dbReference>
<dbReference type="InterPro" id="IPR047017">
    <property type="entry name" value="RGS6/7/9/11_DHEX_sf"/>
</dbReference>
<dbReference type="InterPro" id="IPR037956">
    <property type="entry name" value="RGS6_RGS"/>
</dbReference>
<dbReference type="InterPro" id="IPR040759">
    <property type="entry name" value="RGS_DHEX"/>
</dbReference>
<dbReference type="InterPro" id="IPR036305">
    <property type="entry name" value="RGS_sf"/>
</dbReference>
<dbReference type="InterPro" id="IPR044926">
    <property type="entry name" value="RGS_subdomain_2"/>
</dbReference>
<dbReference type="InterPro" id="IPR036388">
    <property type="entry name" value="WH-like_DNA-bd_sf"/>
</dbReference>
<dbReference type="InterPro" id="IPR036390">
    <property type="entry name" value="WH_DNA-bd_sf"/>
</dbReference>
<dbReference type="PANTHER" id="PTHR45746">
    <property type="entry name" value="LP21163P"/>
    <property type="match status" value="1"/>
</dbReference>
<dbReference type="PANTHER" id="PTHR45746:SF2">
    <property type="entry name" value="REGULATOR OF G-PROTEIN SIGNALING 6"/>
    <property type="match status" value="1"/>
</dbReference>
<dbReference type="Pfam" id="PF00610">
    <property type="entry name" value="DEP"/>
    <property type="match status" value="1"/>
</dbReference>
<dbReference type="Pfam" id="PF00631">
    <property type="entry name" value="G-gamma"/>
    <property type="match status" value="1"/>
</dbReference>
<dbReference type="Pfam" id="PF00615">
    <property type="entry name" value="RGS"/>
    <property type="match status" value="1"/>
</dbReference>
<dbReference type="Pfam" id="PF18148">
    <property type="entry name" value="RGS_DHEX"/>
    <property type="match status" value="1"/>
</dbReference>
<dbReference type="PRINTS" id="PR01301">
    <property type="entry name" value="RGSPROTEIN"/>
</dbReference>
<dbReference type="SMART" id="SM00049">
    <property type="entry name" value="DEP"/>
    <property type="match status" value="1"/>
</dbReference>
<dbReference type="SMART" id="SM01224">
    <property type="entry name" value="G_gamma"/>
    <property type="match status" value="1"/>
</dbReference>
<dbReference type="SMART" id="SM00224">
    <property type="entry name" value="GGL"/>
    <property type="match status" value="1"/>
</dbReference>
<dbReference type="SMART" id="SM00315">
    <property type="entry name" value="RGS"/>
    <property type="match status" value="1"/>
</dbReference>
<dbReference type="SUPFAM" id="SSF48097">
    <property type="entry name" value="Regulator of G-protein signaling, RGS"/>
    <property type="match status" value="1"/>
</dbReference>
<dbReference type="SUPFAM" id="SSF48670">
    <property type="entry name" value="Transducin (heterotrimeric G protein), gamma chain"/>
    <property type="match status" value="1"/>
</dbReference>
<dbReference type="SUPFAM" id="SSF46785">
    <property type="entry name" value="Winged helix' DNA-binding domain"/>
    <property type="match status" value="1"/>
</dbReference>
<dbReference type="PROSITE" id="PS50186">
    <property type="entry name" value="DEP"/>
    <property type="match status" value="1"/>
</dbReference>
<dbReference type="PROSITE" id="PS50132">
    <property type="entry name" value="RGS"/>
    <property type="match status" value="1"/>
</dbReference>
<evidence type="ECO:0000250" key="1">
    <source>
        <dbReference type="UniProtKB" id="Q9Z2H2"/>
    </source>
</evidence>
<evidence type="ECO:0000255" key="2">
    <source>
        <dbReference type="PROSITE-ProRule" id="PRU00066"/>
    </source>
</evidence>
<evidence type="ECO:0000255" key="3">
    <source>
        <dbReference type="PROSITE-ProRule" id="PRU00171"/>
    </source>
</evidence>
<evidence type="ECO:0000269" key="4">
    <source>
    </source>
</evidence>
<evidence type="ECO:0000269" key="5">
    <source>
    </source>
</evidence>
<evidence type="ECO:0000269" key="6">
    <source>
    </source>
</evidence>
<evidence type="ECO:0000269" key="7">
    <source>
    </source>
</evidence>
<evidence type="ECO:0000303" key="8">
    <source>
    </source>
</evidence>
<evidence type="ECO:0000303" key="9">
    <source>
    </source>
</evidence>
<evidence type="ECO:0000305" key="10"/>
<evidence type="ECO:0007829" key="11">
    <source>
        <dbReference type="PDB" id="2ES0"/>
    </source>
</evidence>
<keyword id="KW-0002">3D-structure</keyword>
<keyword id="KW-0025">Alternative splicing</keyword>
<keyword id="KW-1003">Cell membrane</keyword>
<keyword id="KW-0963">Cytoplasm</keyword>
<keyword id="KW-0343">GTPase activation</keyword>
<keyword id="KW-0472">Membrane</keyword>
<keyword id="KW-0539">Nucleus</keyword>
<keyword id="KW-1267">Proteomics identification</keyword>
<keyword id="KW-1185">Reference proteome</keyword>
<keyword id="KW-0734">Signal transduction inhibitor</keyword>
<organism>
    <name type="scientific">Homo sapiens</name>
    <name type="common">Human</name>
    <dbReference type="NCBI Taxonomy" id="9606"/>
    <lineage>
        <taxon>Eukaryota</taxon>
        <taxon>Metazoa</taxon>
        <taxon>Chordata</taxon>
        <taxon>Craniata</taxon>
        <taxon>Vertebrata</taxon>
        <taxon>Euteleostomi</taxon>
        <taxon>Mammalia</taxon>
        <taxon>Eutheria</taxon>
        <taxon>Euarchontoglires</taxon>
        <taxon>Primates</taxon>
        <taxon>Haplorrhini</taxon>
        <taxon>Catarrhini</taxon>
        <taxon>Hominidae</taxon>
        <taxon>Homo</taxon>
    </lineage>
</organism>
<name>RGS6_HUMAN</name>
<sequence>MAQGSGDQRAVGVADPEESSPNMIVYCKIEDIITKMQDDKTGGVPIRTVKSFLSKIPSVVTGTDIVQWLMKNLSIEDPVEAIHLGSLIAAQGYIFPISDHVLTMKDDGTFYRFQAPYFWPSNCWEPENTDYAIYLCKRTMQNKARLELADYEAENLARLQRAFARKWEFIFMQAEAQVKIDRKKDKTERKILDSQERAFWDVHRPVPGCVNTTEMDIRKCRRLKNPQKVKKSVYGVTEESQAQSPVHVLSQPIRKTTKEDIRKQITFLNAQIDRHCLKMSKVAESLIAYTEQYVEYDPLITPAEPSNPWISDDVALWDIEMSKEPSQQRVKRWGFSFDEILKDQVGRDQFLRFLESEFSSENLRFWLAVQDLKKQPLQDVAKRVEEIWQEFLAPGAPSAINLDSHSYEITSQNVKDGGRYTFEDAQEHIYKLMKSDSYARFLRSNAYQDLLLAKKKGKSLAGKRLTGLMQSS</sequence>
<comment type="function">
    <text evidence="5">Regulates G protein-coupled receptor signaling cascades. Inhibits signal transduction by increasing the GTPase activity of G protein alpha subunits, thereby driving them into their inactive GDP-bound form. The RGS6/GNB5 dimer enhances GNAO1 GTPase activity (PubMed:10521509).</text>
</comment>
<comment type="subunit">
    <text evidence="1 4 5 6 7">Interacts with GNB5 (PubMed:10339615, PubMed:10521509, PubMed:12761221). Interacts with RGS7BP, leading to regulate the subcellular location of the heterodimer formed with GNB5 (By similarity). Interacts with GNAI1 (PubMed:18434541).</text>
</comment>
<comment type="interaction">
    <interactant intactId="EBI-6426927">
        <id>P49758</id>
    </interactant>
    <interactant intactId="EBI-713325">
        <id>O14775</id>
        <label>GNB5</label>
    </interactant>
    <organismsDiffer>false</organismsDiffer>
    <experiments>2</experiments>
</comment>
<comment type="interaction">
    <interactant intactId="EBI-6426927">
        <id>P49758</id>
    </interactant>
    <interactant intactId="EBI-352572">
        <id>P08238</id>
        <label>HSP90AB1</label>
    </interactant>
    <organismsDiffer>false</organismsDiffer>
    <experiments>2</experiments>
</comment>
<comment type="subcellular location">
    <subcellularLocation>
        <location evidence="6">Cytoplasm</location>
    </subcellularLocation>
    <subcellularLocation>
        <location evidence="5">Cytoplasm</location>
        <location evidence="5">Cytosol</location>
    </subcellularLocation>
    <subcellularLocation>
        <location evidence="5">Membrane</location>
        <topology evidence="5">Peripheral membrane protein</topology>
    </subcellularLocation>
    <subcellularLocation>
        <location evidence="6">Nucleus</location>
    </subcellularLocation>
    <subcellularLocation>
        <location evidence="1">Cell membrane</location>
    </subcellularLocation>
    <text evidence="6">Interaction with GNB5 mediates translocation to the nucleus.</text>
</comment>
<comment type="alternative products">
    <event type="alternative splicing"/>
    <isoform>
        <id>P49758-4</id>
        <name>1</name>
        <name>RGS6Lalpha2</name>
        <sequence type="displayed"/>
    </isoform>
    <isoform>
        <id>P49758-2</id>
        <name>2</name>
        <name>RGS6Lgamma1</name>
        <name evidence="9">RGS6Lbeta1</name>
        <sequence type="described" ref="VSP_035848"/>
    </isoform>
    <isoform>
        <id>P49758-3</id>
        <name>3</name>
        <name>RGS6Lalpha1</name>
        <sequence type="described" ref="VSP_035847"/>
    </isoform>
    <isoform>
        <id>P49758-5</id>
        <name>5</name>
        <name>RGS6Lbeta</name>
        <sequence type="described" ref="VSP_035849"/>
    </isoform>
    <isoform>
        <id>P49758-6</id>
        <name>6</name>
        <name>RGS6Lbeta-GGL</name>
        <sequence type="described" ref="VSP_035846 VSP_035849"/>
    </isoform>
    <isoform>
        <id>P49758-7</id>
        <name>7</name>
        <name>RGS6Lalpha2-GGL</name>
        <sequence type="described" ref="VSP_035846"/>
    </isoform>
    <isoform>
        <id>P49758-8</id>
        <name>8</name>
        <name>RGS6Lgamma2</name>
        <name evidence="9">RGS6Lbeta2</name>
        <sequence type="described" ref="VSP_035850"/>
    </isoform>
    <isoform>
        <id>P49758-9</id>
        <name>9</name>
        <name>RGS6Lalpha1-GGL</name>
        <sequence type="described" ref="VSP_035846 VSP_035847"/>
    </isoform>
    <isoform>
        <id>P49758-10</id>
        <name>10</name>
        <name>RGS6Lgamma1-GGL</name>
        <sequence type="described" ref="VSP_035846 VSP_035848"/>
    </isoform>
    <isoform>
        <id>P49758-11</id>
        <name>11</name>
        <name>RGS6Lgamma2-GGL</name>
        <sequence type="described" ref="VSP_035846 VSP_035850"/>
    </isoform>
    <isoform>
        <id>P49758-12</id>
        <name>12</name>
        <name evidence="9">RGS6Sbeta1</name>
        <sequence type="described" ref="VSP_035845 VSP_035848"/>
    </isoform>
    <isoform>
        <id>P49758-13</id>
        <name>13</name>
        <name>RGS6Lepsilon</name>
        <sequence type="described" ref="VSP_047806"/>
    </isoform>
    <isoform>
        <id>P49758-14</id>
        <name>14</name>
        <name>RGS6Ldelta</name>
        <sequence type="described" ref="VSP_047807"/>
    </isoform>
    <isoform>
        <id>P49758-15</id>
        <name>15</name>
        <name>RGS6Lgamma</name>
        <sequence type="described" ref="VSP_047808"/>
    </isoform>
    <isoform>
        <id>P49758-16</id>
        <name>16</name>
        <name>RGS6Leta</name>
        <sequence type="described" ref="VSP_047809"/>
    </isoform>
    <text evidence="6">Additional isoforms seem to exist.</text>
</comment>
<comment type="domain">
    <text>The RGS domain interacts avidly with Galpha and mediates the acceleration of Galpha-mediated GTP hydrolysis.</text>
</comment>
<comment type="sequence caution" evidence="10">
    <conflict type="frameshift">
        <sequence resource="EMBL-CDS" id="AAC42001"/>
    </conflict>
</comment>
<protein>
    <recommendedName>
        <fullName>Regulator of G-protein signaling 6</fullName>
        <shortName>RGS6</shortName>
    </recommendedName>
    <alternativeName>
        <fullName>S914</fullName>
    </alternativeName>
</protein>
<gene>
    <name type="primary">RGS6</name>
</gene>